<feature type="initiator methionine" description="Removed">
    <location>
        <position position="1"/>
    </location>
</feature>
<feature type="chain" id="PRO_0000443014" description="Actin, cytoplasmic, intermediate form" evidence="1">
    <location>
        <begin position="2"/>
        <end position="376"/>
    </location>
</feature>
<feature type="chain" id="PRO_0000000709" description="Actin, cytoplasmic" evidence="5">
    <location>
        <begin position="3"/>
        <end position="376"/>
    </location>
</feature>
<feature type="modified residue" description="N-acetylcysteine; in intermediate form" evidence="1">
    <location>
        <position position="2"/>
    </location>
</feature>
<feature type="modified residue" description="N-acetylaspartate; in Actin, cytoplasmic" evidence="5">
    <location>
        <position position="3"/>
    </location>
</feature>
<feature type="modified residue" description="Methionine (R)-sulfoxide" evidence="4">
    <location>
        <position position="45"/>
    </location>
</feature>
<feature type="modified residue" description="Methionine (R)-sulfoxide" evidence="4">
    <location>
        <position position="48"/>
    </location>
</feature>
<feature type="modified residue" description="Tele-methylhistidine" evidence="2">
    <location>
        <position position="74"/>
    </location>
</feature>
<feature type="modified residue" description="N6-methyllysine" evidence="3">
    <location>
        <position position="85"/>
    </location>
</feature>
<proteinExistence type="inferred from homology"/>
<comment type="function">
    <text>Actins are highly conserved proteins that are involved in various types of cell motility and are ubiquitously expressed in all eukaryotic cells.</text>
</comment>
<comment type="catalytic activity">
    <reaction evidence="6">
        <text>ATP + H2O = ADP + phosphate + H(+)</text>
        <dbReference type="Rhea" id="RHEA:13065"/>
        <dbReference type="ChEBI" id="CHEBI:15377"/>
        <dbReference type="ChEBI" id="CHEBI:15378"/>
        <dbReference type="ChEBI" id="CHEBI:30616"/>
        <dbReference type="ChEBI" id="CHEBI:43474"/>
        <dbReference type="ChEBI" id="CHEBI:456216"/>
    </reaction>
</comment>
<comment type="subcellular location">
    <subcellularLocation>
        <location>Cytoplasm</location>
        <location>Cytoskeleton</location>
    </subcellularLocation>
</comment>
<comment type="PTM">
    <text evidence="4">Oxidation of Met-45 and Met-48 by MICALs (MICAL1, MICAL2 or MICAL3) to form methionine sulfoxide promotes actin filament depolymerization. MICAL1 and MICAL2 produce the (R)-S-oxide form. The (R)-S-oxide form is reverted by MSRB1 and MSRB2, which promotes actin repolymerization.</text>
</comment>
<comment type="PTM">
    <text evidence="3">Monomethylation at Lys-85 (K85me1) regulates actin-myosin interaction and actomyosin-dependent processes. Demethylation by ALKBH4 is required for maintaining actomyosin dynamics supporting normal cleavage furrow ingression during cytokinesis and cell migration.</text>
</comment>
<comment type="similarity">
    <text evidence="7">Belongs to the actin family.</text>
</comment>
<accession>P12716</accession>
<keyword id="KW-0007">Acetylation</keyword>
<keyword id="KW-0067">ATP-binding</keyword>
<keyword id="KW-0963">Cytoplasm</keyword>
<keyword id="KW-0206">Cytoskeleton</keyword>
<keyword id="KW-0378">Hydrolase</keyword>
<keyword id="KW-0488">Methylation</keyword>
<keyword id="KW-0547">Nucleotide-binding</keyword>
<keyword id="KW-0558">Oxidation</keyword>
<name>ACTC_PISOC</name>
<dbReference type="EC" id="3.6.4.-" evidence="6"/>
<dbReference type="EMBL" id="M26501">
    <property type="protein sequence ID" value="AAA29788.1"/>
    <property type="molecule type" value="Genomic_DNA"/>
</dbReference>
<dbReference type="PIR" id="JS0189">
    <property type="entry name" value="JS0189"/>
</dbReference>
<dbReference type="SMR" id="P12716"/>
<dbReference type="GO" id="GO:0005737">
    <property type="term" value="C:cytoplasm"/>
    <property type="evidence" value="ECO:0007669"/>
    <property type="project" value="UniProtKB-KW"/>
</dbReference>
<dbReference type="GO" id="GO:0005856">
    <property type="term" value="C:cytoskeleton"/>
    <property type="evidence" value="ECO:0007669"/>
    <property type="project" value="UniProtKB-SubCell"/>
</dbReference>
<dbReference type="GO" id="GO:0005524">
    <property type="term" value="F:ATP binding"/>
    <property type="evidence" value="ECO:0007669"/>
    <property type="project" value="UniProtKB-KW"/>
</dbReference>
<dbReference type="GO" id="GO:0016787">
    <property type="term" value="F:hydrolase activity"/>
    <property type="evidence" value="ECO:0007669"/>
    <property type="project" value="UniProtKB-KW"/>
</dbReference>
<dbReference type="CDD" id="cd10224">
    <property type="entry name" value="ASKHA_NBD_actin"/>
    <property type="match status" value="1"/>
</dbReference>
<dbReference type="FunFam" id="3.30.420.40:FF:000131">
    <property type="entry name" value="Actin, alpha skeletal muscle"/>
    <property type="match status" value="1"/>
</dbReference>
<dbReference type="FunFam" id="3.30.420.40:FF:000291">
    <property type="entry name" value="Actin, alpha skeletal muscle"/>
    <property type="match status" value="1"/>
</dbReference>
<dbReference type="FunFam" id="3.90.640.10:FF:000047">
    <property type="entry name" value="Actin, alpha skeletal muscle"/>
    <property type="match status" value="1"/>
</dbReference>
<dbReference type="FunFam" id="3.30.420.40:FF:000058">
    <property type="entry name" value="Putative actin-related protein 5"/>
    <property type="match status" value="1"/>
</dbReference>
<dbReference type="Gene3D" id="3.30.420.40">
    <property type="match status" value="2"/>
</dbReference>
<dbReference type="Gene3D" id="3.90.640.10">
    <property type="entry name" value="Actin, Chain A, domain 4"/>
    <property type="match status" value="1"/>
</dbReference>
<dbReference type="InterPro" id="IPR004000">
    <property type="entry name" value="Actin"/>
</dbReference>
<dbReference type="InterPro" id="IPR020902">
    <property type="entry name" value="Actin/actin-like_CS"/>
</dbReference>
<dbReference type="InterPro" id="IPR004001">
    <property type="entry name" value="Actin_CS"/>
</dbReference>
<dbReference type="InterPro" id="IPR043129">
    <property type="entry name" value="ATPase_NBD"/>
</dbReference>
<dbReference type="PANTHER" id="PTHR11937">
    <property type="entry name" value="ACTIN"/>
    <property type="match status" value="1"/>
</dbReference>
<dbReference type="Pfam" id="PF00022">
    <property type="entry name" value="Actin"/>
    <property type="match status" value="1"/>
</dbReference>
<dbReference type="PRINTS" id="PR00190">
    <property type="entry name" value="ACTIN"/>
</dbReference>
<dbReference type="SMART" id="SM00268">
    <property type="entry name" value="ACTIN"/>
    <property type="match status" value="1"/>
</dbReference>
<dbReference type="SUPFAM" id="SSF53067">
    <property type="entry name" value="Actin-like ATPase domain"/>
    <property type="match status" value="2"/>
</dbReference>
<dbReference type="PROSITE" id="PS00406">
    <property type="entry name" value="ACTINS_1"/>
    <property type="match status" value="1"/>
</dbReference>
<dbReference type="PROSITE" id="PS00432">
    <property type="entry name" value="ACTINS_2"/>
    <property type="match status" value="1"/>
</dbReference>
<dbReference type="PROSITE" id="PS01132">
    <property type="entry name" value="ACTINS_ACT_LIKE"/>
    <property type="match status" value="1"/>
</dbReference>
<evidence type="ECO:0000250" key="1">
    <source>
        <dbReference type="UniProtKB" id="P62737"/>
    </source>
</evidence>
<evidence type="ECO:0000250" key="2">
    <source>
        <dbReference type="UniProtKB" id="P62739"/>
    </source>
</evidence>
<evidence type="ECO:0000250" key="3">
    <source>
        <dbReference type="UniProtKB" id="P68032"/>
    </source>
</evidence>
<evidence type="ECO:0000250" key="4">
    <source>
        <dbReference type="UniProtKB" id="P68033"/>
    </source>
</evidence>
<evidence type="ECO:0000250" key="5">
    <source>
        <dbReference type="UniProtKB" id="P68135"/>
    </source>
</evidence>
<evidence type="ECO:0000250" key="6">
    <source>
        <dbReference type="UniProtKB" id="P68137"/>
    </source>
</evidence>
<evidence type="ECO:0000305" key="7"/>
<protein>
    <recommendedName>
        <fullName>Actin, cytoplasmic</fullName>
        <ecNumber evidence="6">3.6.4.-</ecNumber>
    </recommendedName>
    <component>
        <recommendedName>
            <fullName>Actin, cytoplasmic, intermediate form</fullName>
        </recommendedName>
    </component>
</protein>
<sequence length="376" mass="41849">MCDEDVAALVVDNGSGMCKAGFAGDDAPRAVFPSIVGRPRHQGVMVGMGQKDSYVGDEAQSKRGILTLKYPIEHGIVTNWDDMEKIWHHTFYNELRVAPEEHPVLLTEAPLNPKANREKMTQIMFETFNTPAMYVAIQAVLSLYASGRTTGIVFDSGDGVSHTVPIYEGYALPHAILRLDLAGRDLTDYLMKILTERGYSFTTTAEREIVRDIKEKLCYVALDFEQEMQTAASSSSLEKSYELPDGQVITIGNERFRCPEALFQPSFLGMESAGIHETTYNSIMKCDVDIRKDLYANTVLSGGSTMFPGIADRMQKEVTALAPPTMKIKIIAPPERKYSVWIGGSILASLSTFQQMWISKQEYDESGPSIVHRKCF</sequence>
<organism>
    <name type="scientific">Pisaster ochraceus</name>
    <name type="common">Ochre sea star</name>
    <name type="synonym">Asterias ochracea</name>
    <dbReference type="NCBI Taxonomy" id="7612"/>
    <lineage>
        <taxon>Eukaryota</taxon>
        <taxon>Metazoa</taxon>
        <taxon>Echinodermata</taxon>
        <taxon>Eleutherozoa</taxon>
        <taxon>Asterozoa</taxon>
        <taxon>Asteroidea</taxon>
        <taxon>Forcipulatacea</taxon>
        <taxon>Forcipulatida</taxon>
        <taxon>Asteriidae</taxon>
        <taxon>Pisaster</taxon>
    </lineage>
</organism>
<reference key="1">
    <citation type="journal article" date="1989" name="Gene">
        <title>The genomic nucleotide sequences of two differentially expressed actin-coding genes from the sea star Pisaster ochraceus.</title>
        <authorList>
            <person name="Kowbel D.J."/>
            <person name="Smith M.J."/>
        </authorList>
    </citation>
    <scope>NUCLEOTIDE SEQUENCE [GENOMIC DNA]</scope>
</reference>